<name>ILVD_METM5</name>
<reference key="1">
    <citation type="submission" date="2007-03" db="EMBL/GenBank/DDBJ databases">
        <title>Complete sequence of chromosome of Methanococcus maripaludis C5.</title>
        <authorList>
            <consortium name="US DOE Joint Genome Institute"/>
            <person name="Copeland A."/>
            <person name="Lucas S."/>
            <person name="Lapidus A."/>
            <person name="Barry K."/>
            <person name="Glavina del Rio T."/>
            <person name="Dalin E."/>
            <person name="Tice H."/>
            <person name="Pitluck S."/>
            <person name="Chertkov O."/>
            <person name="Brettin T."/>
            <person name="Bruce D."/>
            <person name="Han C."/>
            <person name="Detter J.C."/>
            <person name="Schmutz J."/>
            <person name="Larimer F."/>
            <person name="Land M."/>
            <person name="Hauser L."/>
            <person name="Kyrpides N."/>
            <person name="Mikhailova N."/>
            <person name="Sieprawska-Lupa M."/>
            <person name="Whitman W.B."/>
            <person name="Richardson P."/>
        </authorList>
    </citation>
    <scope>NUCLEOTIDE SEQUENCE [LARGE SCALE GENOMIC DNA]</scope>
    <source>
        <strain>C5 / ATCC BAA-1333</strain>
    </source>
</reference>
<proteinExistence type="inferred from homology"/>
<dbReference type="EC" id="4.2.1.9" evidence="1"/>
<dbReference type="EMBL" id="CP000609">
    <property type="protein sequence ID" value="ABO35654.1"/>
    <property type="molecule type" value="Genomic_DNA"/>
</dbReference>
<dbReference type="RefSeq" id="WP_011869105.1">
    <property type="nucleotide sequence ID" value="NC_009135.1"/>
</dbReference>
<dbReference type="SMR" id="A4FZM0"/>
<dbReference type="STRING" id="402880.MmarC5_1356"/>
<dbReference type="GeneID" id="4928268"/>
<dbReference type="KEGG" id="mmq:MmarC5_1356"/>
<dbReference type="eggNOG" id="arCOG04045">
    <property type="taxonomic scope" value="Archaea"/>
</dbReference>
<dbReference type="HOGENOM" id="CLU_014271_4_2_2"/>
<dbReference type="OrthoDB" id="8674at2157"/>
<dbReference type="UniPathway" id="UPA00047">
    <property type="reaction ID" value="UER00057"/>
</dbReference>
<dbReference type="UniPathway" id="UPA00049">
    <property type="reaction ID" value="UER00061"/>
</dbReference>
<dbReference type="Proteomes" id="UP000000253">
    <property type="component" value="Chromosome"/>
</dbReference>
<dbReference type="GO" id="GO:0005829">
    <property type="term" value="C:cytosol"/>
    <property type="evidence" value="ECO:0007669"/>
    <property type="project" value="TreeGrafter"/>
</dbReference>
<dbReference type="GO" id="GO:0051537">
    <property type="term" value="F:2 iron, 2 sulfur cluster binding"/>
    <property type="evidence" value="ECO:0007669"/>
    <property type="project" value="UniProtKB-UniRule"/>
</dbReference>
<dbReference type="GO" id="GO:0004160">
    <property type="term" value="F:dihydroxy-acid dehydratase activity"/>
    <property type="evidence" value="ECO:0007669"/>
    <property type="project" value="UniProtKB-UniRule"/>
</dbReference>
<dbReference type="GO" id="GO:0000287">
    <property type="term" value="F:magnesium ion binding"/>
    <property type="evidence" value="ECO:0007669"/>
    <property type="project" value="UniProtKB-UniRule"/>
</dbReference>
<dbReference type="GO" id="GO:0009097">
    <property type="term" value="P:isoleucine biosynthetic process"/>
    <property type="evidence" value="ECO:0007669"/>
    <property type="project" value="UniProtKB-UniRule"/>
</dbReference>
<dbReference type="GO" id="GO:0009099">
    <property type="term" value="P:L-valine biosynthetic process"/>
    <property type="evidence" value="ECO:0007669"/>
    <property type="project" value="UniProtKB-UniRule"/>
</dbReference>
<dbReference type="FunFam" id="3.50.30.80:FF:000001">
    <property type="entry name" value="Dihydroxy-acid dehydratase"/>
    <property type="match status" value="1"/>
</dbReference>
<dbReference type="Gene3D" id="3.50.30.80">
    <property type="entry name" value="IlvD/EDD C-terminal domain-like"/>
    <property type="match status" value="1"/>
</dbReference>
<dbReference type="HAMAP" id="MF_00012">
    <property type="entry name" value="IlvD"/>
    <property type="match status" value="1"/>
</dbReference>
<dbReference type="InterPro" id="IPR042096">
    <property type="entry name" value="Dihydro-acid_dehy_C"/>
</dbReference>
<dbReference type="InterPro" id="IPR004404">
    <property type="entry name" value="DihydroxyA_deHydtase"/>
</dbReference>
<dbReference type="InterPro" id="IPR020558">
    <property type="entry name" value="DiOHA_6PGluconate_deHydtase_CS"/>
</dbReference>
<dbReference type="InterPro" id="IPR056740">
    <property type="entry name" value="ILV_EDD_C"/>
</dbReference>
<dbReference type="InterPro" id="IPR000581">
    <property type="entry name" value="ILV_EDD_N"/>
</dbReference>
<dbReference type="InterPro" id="IPR037237">
    <property type="entry name" value="IlvD/EDD_N"/>
</dbReference>
<dbReference type="NCBIfam" id="TIGR00110">
    <property type="entry name" value="ilvD"/>
    <property type="match status" value="1"/>
</dbReference>
<dbReference type="NCBIfam" id="NF002068">
    <property type="entry name" value="PRK00911.1"/>
    <property type="match status" value="1"/>
</dbReference>
<dbReference type="PANTHER" id="PTHR43661">
    <property type="entry name" value="D-XYLONATE DEHYDRATASE"/>
    <property type="match status" value="1"/>
</dbReference>
<dbReference type="PANTHER" id="PTHR43661:SF3">
    <property type="entry name" value="D-XYLONATE DEHYDRATASE YAGF-RELATED"/>
    <property type="match status" value="1"/>
</dbReference>
<dbReference type="Pfam" id="PF24877">
    <property type="entry name" value="ILV_EDD_C"/>
    <property type="match status" value="1"/>
</dbReference>
<dbReference type="Pfam" id="PF00920">
    <property type="entry name" value="ILVD_EDD_N"/>
    <property type="match status" value="1"/>
</dbReference>
<dbReference type="SUPFAM" id="SSF143975">
    <property type="entry name" value="IlvD/EDD N-terminal domain-like"/>
    <property type="match status" value="1"/>
</dbReference>
<dbReference type="SUPFAM" id="SSF52016">
    <property type="entry name" value="LeuD/IlvD-like"/>
    <property type="match status" value="1"/>
</dbReference>
<dbReference type="PROSITE" id="PS00886">
    <property type="entry name" value="ILVD_EDD_1"/>
    <property type="match status" value="1"/>
</dbReference>
<dbReference type="PROSITE" id="PS00887">
    <property type="entry name" value="ILVD_EDD_2"/>
    <property type="match status" value="1"/>
</dbReference>
<keyword id="KW-0001">2Fe-2S</keyword>
<keyword id="KW-0028">Amino-acid biosynthesis</keyword>
<keyword id="KW-0100">Branched-chain amino acid biosynthesis</keyword>
<keyword id="KW-0408">Iron</keyword>
<keyword id="KW-0411">Iron-sulfur</keyword>
<keyword id="KW-0456">Lyase</keyword>
<keyword id="KW-0460">Magnesium</keyword>
<keyword id="KW-0479">Metal-binding</keyword>
<feature type="chain" id="PRO_1000001006" description="Dihydroxy-acid dehydratase">
    <location>
        <begin position="1"/>
        <end position="550"/>
    </location>
</feature>
<feature type="active site" description="Proton acceptor" evidence="1">
    <location>
        <position position="466"/>
    </location>
</feature>
<feature type="binding site" evidence="1">
    <location>
        <position position="78"/>
    </location>
    <ligand>
        <name>Mg(2+)</name>
        <dbReference type="ChEBI" id="CHEBI:18420"/>
    </ligand>
</feature>
<feature type="binding site" evidence="1">
    <location>
        <position position="119"/>
    </location>
    <ligand>
        <name>[2Fe-2S] cluster</name>
        <dbReference type="ChEBI" id="CHEBI:190135"/>
    </ligand>
</feature>
<feature type="binding site" evidence="1">
    <location>
        <position position="120"/>
    </location>
    <ligand>
        <name>Mg(2+)</name>
        <dbReference type="ChEBI" id="CHEBI:18420"/>
    </ligand>
</feature>
<feature type="binding site" description="via carbamate group" evidence="1">
    <location>
        <position position="121"/>
    </location>
    <ligand>
        <name>Mg(2+)</name>
        <dbReference type="ChEBI" id="CHEBI:18420"/>
    </ligand>
</feature>
<feature type="binding site" evidence="1">
    <location>
        <position position="191"/>
    </location>
    <ligand>
        <name>[2Fe-2S] cluster</name>
        <dbReference type="ChEBI" id="CHEBI:190135"/>
    </ligand>
</feature>
<feature type="binding site" evidence="1">
    <location>
        <position position="440"/>
    </location>
    <ligand>
        <name>Mg(2+)</name>
        <dbReference type="ChEBI" id="CHEBI:18420"/>
    </ligand>
</feature>
<feature type="modified residue" description="N6-carboxylysine" evidence="1">
    <location>
        <position position="121"/>
    </location>
</feature>
<gene>
    <name evidence="1" type="primary">ilvD</name>
    <name type="ordered locus">MmarC5_1356</name>
</gene>
<evidence type="ECO:0000255" key="1">
    <source>
        <dbReference type="HAMAP-Rule" id="MF_00012"/>
    </source>
</evidence>
<protein>
    <recommendedName>
        <fullName evidence="1">Dihydroxy-acid dehydratase</fullName>
        <shortName evidence="1">DAD</shortName>
        <ecNumber evidence="1">4.2.1.9</ecNumber>
    </recommendedName>
</protein>
<organism>
    <name type="scientific">Methanococcus maripaludis (strain C5 / ATCC BAA-1333)</name>
    <dbReference type="NCBI Taxonomy" id="402880"/>
    <lineage>
        <taxon>Archaea</taxon>
        <taxon>Methanobacteriati</taxon>
        <taxon>Methanobacteriota</taxon>
        <taxon>Methanomada group</taxon>
        <taxon>Methanococci</taxon>
        <taxon>Methanococcales</taxon>
        <taxon>Methanococcaceae</taxon>
        <taxon>Methanococcus</taxon>
    </lineage>
</organism>
<accession>A4FZM0</accession>
<sequence length="550" mass="58615">MISDNVKKGVIRSPNRALLKACGYSDEDMEKPFIGVVNSFTEVVPGHIHLKTLSDAVKHGVYANGGTPFEFNTIGICDGIAMGHEGMKYSLPSREIIADAVESMARAHGFDGLVLIPTCDKIVPGMIMGALRLNIPFIVVTGGPMLPGEFQGKKCELISLFEGVGEYQVGKITEEELKSIEECACPGAGSCAGLYTANSMACLTEALGLSLPMCATIHAVDAQKVRIAKKTGSKIVDLVKEDVKPTDILTKEAFENAILVDLALGGSTNTTLHIPAIANEIENKFITLDDFDRLSDEVPHIASIKPGGEHYMIDLHNAGGIPAVLKVLKEKIRNTKTVDGRSTLEIAESVKYVNYDVIRKVEAPVHETAGLRVLKGNLAPNGCVVKIGAVDPKMHKHEGPAKVYNSEDEAIAAILGGKIVEGDVVVIRHEGPSGGPGMREMLSPTSAICGMGLDDSVALITDGRFSGGSRGPCIGHVSPEAAAGGLIAAIENGDIIKIDMIEKEINVDLDESVIKERLSKLEEFEPKIKKGYLSRYSRLVSSADEGAVLK</sequence>
<comment type="function">
    <text evidence="1">Functions in the biosynthesis of branched-chain amino acids. Catalyzes the dehydration of (2R,3R)-2,3-dihydroxy-3-methylpentanoate (2,3-dihydroxy-3-methylvalerate) into 2-oxo-3-methylpentanoate (2-oxo-3-methylvalerate) and of (2R)-2,3-dihydroxy-3-methylbutanoate (2,3-dihydroxyisovalerate) into 2-oxo-3-methylbutanoate (2-oxoisovalerate), the penultimate precursor to L-isoleucine and L-valine, respectively.</text>
</comment>
<comment type="catalytic activity">
    <reaction evidence="1">
        <text>(2R)-2,3-dihydroxy-3-methylbutanoate = 3-methyl-2-oxobutanoate + H2O</text>
        <dbReference type="Rhea" id="RHEA:24809"/>
        <dbReference type="ChEBI" id="CHEBI:11851"/>
        <dbReference type="ChEBI" id="CHEBI:15377"/>
        <dbReference type="ChEBI" id="CHEBI:49072"/>
        <dbReference type="EC" id="4.2.1.9"/>
    </reaction>
    <physiologicalReaction direction="left-to-right" evidence="1">
        <dbReference type="Rhea" id="RHEA:24810"/>
    </physiologicalReaction>
</comment>
<comment type="catalytic activity">
    <reaction evidence="1">
        <text>(2R,3R)-2,3-dihydroxy-3-methylpentanoate = (S)-3-methyl-2-oxopentanoate + H2O</text>
        <dbReference type="Rhea" id="RHEA:27694"/>
        <dbReference type="ChEBI" id="CHEBI:15377"/>
        <dbReference type="ChEBI" id="CHEBI:35146"/>
        <dbReference type="ChEBI" id="CHEBI:49258"/>
        <dbReference type="EC" id="4.2.1.9"/>
    </reaction>
    <physiologicalReaction direction="left-to-right" evidence="1">
        <dbReference type="Rhea" id="RHEA:27695"/>
    </physiologicalReaction>
</comment>
<comment type="cofactor">
    <cofactor evidence="1">
        <name>[2Fe-2S] cluster</name>
        <dbReference type="ChEBI" id="CHEBI:190135"/>
    </cofactor>
    <text evidence="1">Binds 1 [2Fe-2S] cluster per subunit. This cluster acts as a Lewis acid cofactor.</text>
</comment>
<comment type="cofactor">
    <cofactor evidence="1">
        <name>Mg(2+)</name>
        <dbReference type="ChEBI" id="CHEBI:18420"/>
    </cofactor>
</comment>
<comment type="pathway">
    <text evidence="1">Amino-acid biosynthesis; L-isoleucine biosynthesis; L-isoleucine from 2-oxobutanoate: step 3/4.</text>
</comment>
<comment type="pathway">
    <text evidence="1">Amino-acid biosynthesis; L-valine biosynthesis; L-valine from pyruvate: step 3/4.</text>
</comment>
<comment type="subunit">
    <text evidence="1">Homodimer.</text>
</comment>
<comment type="similarity">
    <text evidence="1">Belongs to the IlvD/Edd family.</text>
</comment>